<accession>Q89WA4</accession>
<reference key="1">
    <citation type="journal article" date="2002" name="DNA Res.">
        <title>Complete genomic sequence of nitrogen-fixing symbiotic bacterium Bradyrhizobium japonicum USDA110.</title>
        <authorList>
            <person name="Kaneko T."/>
            <person name="Nakamura Y."/>
            <person name="Sato S."/>
            <person name="Minamisawa K."/>
            <person name="Uchiumi T."/>
            <person name="Sasamoto S."/>
            <person name="Watanabe A."/>
            <person name="Idesawa K."/>
            <person name="Iriguchi M."/>
            <person name="Kawashima K."/>
            <person name="Kohara M."/>
            <person name="Matsumoto M."/>
            <person name="Shimpo S."/>
            <person name="Tsuruoka H."/>
            <person name="Wada T."/>
            <person name="Yamada M."/>
            <person name="Tabata S."/>
        </authorList>
    </citation>
    <scope>NUCLEOTIDE SEQUENCE [LARGE SCALE GENOMIC DNA]</scope>
    <source>
        <strain>JCM 10833 / BCRC 13528 / IAM 13628 / NBRC 14792 / USDA 110</strain>
    </source>
</reference>
<sequence length="236" mass="26766">MSERKSDPDRDDSERAFFGRRKGHKLRQHQAELIDHLLPHLALDIAGEAPGNACEIFDPAASDVRLEIGFGGGEHLAAEAQNFATTGFIGCEPYVNGMAKILAQIEAGNIANIRLFAGDAAELLAWLPKASLSRIDLIHPDPWPKRRHWKRRFVQDRTIAAMARVLKVGGEFRFVCDIDDYCAWTLSHLARSADFKWLAERADDFRQPWDGYTMTRYGRKAAREGRKAAYLRFRRS</sequence>
<comment type="function">
    <text evidence="2">Catalyzes the formation of N(7)-methylguanine at position 46 (m7G46) in tRNA.</text>
</comment>
<comment type="catalytic activity">
    <reaction evidence="2">
        <text>guanosine(46) in tRNA + S-adenosyl-L-methionine = N(7)-methylguanosine(46) in tRNA + S-adenosyl-L-homocysteine</text>
        <dbReference type="Rhea" id="RHEA:42708"/>
        <dbReference type="Rhea" id="RHEA-COMP:10188"/>
        <dbReference type="Rhea" id="RHEA-COMP:10189"/>
        <dbReference type="ChEBI" id="CHEBI:57856"/>
        <dbReference type="ChEBI" id="CHEBI:59789"/>
        <dbReference type="ChEBI" id="CHEBI:74269"/>
        <dbReference type="ChEBI" id="CHEBI:74480"/>
        <dbReference type="EC" id="2.1.1.33"/>
    </reaction>
</comment>
<comment type="pathway">
    <text evidence="2">tRNA modification; N(7)-methylguanine-tRNA biosynthesis.</text>
</comment>
<comment type="similarity">
    <text evidence="2">Belongs to the class I-like SAM-binding methyltransferase superfamily. TrmB family.</text>
</comment>
<protein>
    <recommendedName>
        <fullName evidence="2">tRNA (guanine-N(7)-)-methyltransferase</fullName>
        <ecNumber evidence="2">2.1.1.33</ecNumber>
    </recommendedName>
    <alternativeName>
        <fullName evidence="2">tRNA (guanine(46)-N(7))-methyltransferase</fullName>
    </alternativeName>
    <alternativeName>
        <fullName evidence="2">tRNA(m7G46)-methyltransferase</fullName>
    </alternativeName>
</protein>
<proteinExistence type="inferred from homology"/>
<name>TRMB_BRADU</name>
<keyword id="KW-0489">Methyltransferase</keyword>
<keyword id="KW-1185">Reference proteome</keyword>
<keyword id="KW-0949">S-adenosyl-L-methionine</keyword>
<keyword id="KW-0808">Transferase</keyword>
<keyword id="KW-0819">tRNA processing</keyword>
<dbReference type="EC" id="2.1.1.33" evidence="2"/>
<dbReference type="EMBL" id="BA000040">
    <property type="protein sequence ID" value="BAC46053.1"/>
    <property type="molecule type" value="Genomic_DNA"/>
</dbReference>
<dbReference type="RefSeq" id="NP_767428.1">
    <property type="nucleotide sequence ID" value="NC_004463.1"/>
</dbReference>
<dbReference type="RefSeq" id="WP_011083610.1">
    <property type="nucleotide sequence ID" value="NC_004463.1"/>
</dbReference>
<dbReference type="SMR" id="Q89WA4"/>
<dbReference type="FunCoup" id="Q89WA4">
    <property type="interactions" value="405"/>
</dbReference>
<dbReference type="STRING" id="224911.AAV28_00790"/>
<dbReference type="EnsemblBacteria" id="BAC46053">
    <property type="protein sequence ID" value="BAC46053"/>
    <property type="gene ID" value="BAC46053"/>
</dbReference>
<dbReference type="GeneID" id="46488064"/>
<dbReference type="KEGG" id="bja:bll0788"/>
<dbReference type="PATRIC" id="fig|224911.44.peg.163"/>
<dbReference type="eggNOG" id="COG0220">
    <property type="taxonomic scope" value="Bacteria"/>
</dbReference>
<dbReference type="HOGENOM" id="CLU_050910_0_3_5"/>
<dbReference type="InParanoid" id="Q89WA4"/>
<dbReference type="OrthoDB" id="9802090at2"/>
<dbReference type="PhylomeDB" id="Q89WA4"/>
<dbReference type="UniPathway" id="UPA00989"/>
<dbReference type="Proteomes" id="UP000002526">
    <property type="component" value="Chromosome"/>
</dbReference>
<dbReference type="GO" id="GO:0043527">
    <property type="term" value="C:tRNA methyltransferase complex"/>
    <property type="evidence" value="ECO:0000318"/>
    <property type="project" value="GO_Central"/>
</dbReference>
<dbReference type="GO" id="GO:0008176">
    <property type="term" value="F:tRNA (guanine(46)-N7)-methyltransferase activity"/>
    <property type="evidence" value="ECO:0000318"/>
    <property type="project" value="GO_Central"/>
</dbReference>
<dbReference type="GO" id="GO:0036265">
    <property type="term" value="P:RNA (guanine-N7)-methylation"/>
    <property type="evidence" value="ECO:0000318"/>
    <property type="project" value="GO_Central"/>
</dbReference>
<dbReference type="GO" id="GO:0030488">
    <property type="term" value="P:tRNA methylation"/>
    <property type="evidence" value="ECO:0000318"/>
    <property type="project" value="GO_Central"/>
</dbReference>
<dbReference type="FunFam" id="3.40.50.150:FF:000681">
    <property type="entry name" value="tRNA (guanine-N(7)-)-methyltransferase"/>
    <property type="match status" value="1"/>
</dbReference>
<dbReference type="Gene3D" id="3.40.50.150">
    <property type="entry name" value="Vaccinia Virus protein VP39"/>
    <property type="match status" value="1"/>
</dbReference>
<dbReference type="HAMAP" id="MF_01057">
    <property type="entry name" value="tRNA_methyltr_TrmB"/>
    <property type="match status" value="1"/>
</dbReference>
<dbReference type="InterPro" id="IPR029063">
    <property type="entry name" value="SAM-dependent_MTases_sf"/>
</dbReference>
<dbReference type="InterPro" id="IPR003358">
    <property type="entry name" value="tRNA_(Gua-N-7)_MeTrfase_Trmb"/>
</dbReference>
<dbReference type="InterPro" id="IPR055361">
    <property type="entry name" value="tRNA_methyltr_TrmB_bact"/>
</dbReference>
<dbReference type="PANTHER" id="PTHR23417">
    <property type="entry name" value="3-DEOXY-D-MANNO-OCTULOSONIC-ACID TRANSFERASE/TRNA GUANINE-N 7 - -METHYLTRANSFERASE"/>
    <property type="match status" value="1"/>
</dbReference>
<dbReference type="PANTHER" id="PTHR23417:SF14">
    <property type="entry name" value="PENTACOTRIPEPTIDE-REPEAT REGION OF PRORP DOMAIN-CONTAINING PROTEIN"/>
    <property type="match status" value="1"/>
</dbReference>
<dbReference type="Pfam" id="PF02390">
    <property type="entry name" value="Methyltransf_4"/>
    <property type="match status" value="1"/>
</dbReference>
<dbReference type="SUPFAM" id="SSF53335">
    <property type="entry name" value="S-adenosyl-L-methionine-dependent methyltransferases"/>
    <property type="match status" value="1"/>
</dbReference>
<dbReference type="PROSITE" id="PS51625">
    <property type="entry name" value="SAM_MT_TRMB"/>
    <property type="match status" value="1"/>
</dbReference>
<evidence type="ECO:0000250" key="1"/>
<evidence type="ECO:0000255" key="2">
    <source>
        <dbReference type="HAMAP-Rule" id="MF_01057"/>
    </source>
</evidence>
<evidence type="ECO:0000256" key="3">
    <source>
        <dbReference type="SAM" id="MobiDB-lite"/>
    </source>
</evidence>
<feature type="chain" id="PRO_0000171304" description="tRNA (guanine-N(7)-)-methyltransferase">
    <location>
        <begin position="1"/>
        <end position="236"/>
    </location>
</feature>
<feature type="region of interest" description="Disordered" evidence="3">
    <location>
        <begin position="1"/>
        <end position="23"/>
    </location>
</feature>
<feature type="compositionally biased region" description="Basic and acidic residues" evidence="3">
    <location>
        <begin position="1"/>
        <end position="17"/>
    </location>
</feature>
<feature type="active site" evidence="1">
    <location>
        <position position="141"/>
    </location>
</feature>
<feature type="binding site" evidence="2">
    <location>
        <position position="67"/>
    </location>
    <ligand>
        <name>S-adenosyl-L-methionine</name>
        <dbReference type="ChEBI" id="CHEBI:59789"/>
    </ligand>
</feature>
<feature type="binding site" evidence="2">
    <location>
        <position position="92"/>
    </location>
    <ligand>
        <name>S-adenosyl-L-methionine</name>
        <dbReference type="ChEBI" id="CHEBI:59789"/>
    </ligand>
</feature>
<feature type="binding site" evidence="2">
    <location>
        <position position="119"/>
    </location>
    <ligand>
        <name>S-adenosyl-L-methionine</name>
        <dbReference type="ChEBI" id="CHEBI:59789"/>
    </ligand>
</feature>
<feature type="binding site" evidence="2">
    <location>
        <position position="141"/>
    </location>
    <ligand>
        <name>S-adenosyl-L-methionine</name>
        <dbReference type="ChEBI" id="CHEBI:59789"/>
    </ligand>
</feature>
<feature type="binding site" evidence="2">
    <location>
        <position position="145"/>
    </location>
    <ligand>
        <name>substrate</name>
    </ligand>
</feature>
<feature type="binding site" evidence="2">
    <location>
        <position position="177"/>
    </location>
    <ligand>
        <name>substrate</name>
    </ligand>
</feature>
<gene>
    <name evidence="2" type="primary">trmB</name>
    <name type="ordered locus">bll0788</name>
</gene>
<organism>
    <name type="scientific">Bradyrhizobium diazoefficiens (strain JCM 10833 / BCRC 13528 / IAM 13628 / NBRC 14792 / USDA 110)</name>
    <dbReference type="NCBI Taxonomy" id="224911"/>
    <lineage>
        <taxon>Bacteria</taxon>
        <taxon>Pseudomonadati</taxon>
        <taxon>Pseudomonadota</taxon>
        <taxon>Alphaproteobacteria</taxon>
        <taxon>Hyphomicrobiales</taxon>
        <taxon>Nitrobacteraceae</taxon>
        <taxon>Bradyrhizobium</taxon>
    </lineage>
</organism>